<reference evidence="6" key="1">
    <citation type="journal article" date="1999" name="Plant J.">
        <title>A family of antimicrobial peptides is produced by processing of a 7S globulin protein in Macadamia integrifolia kernels.</title>
        <authorList>
            <person name="Marcus J.P."/>
            <person name="Green J.L."/>
            <person name="Goulter K.C."/>
            <person name="Manners J.M."/>
        </authorList>
    </citation>
    <scope>NUCLEOTIDE SEQUENCE [MRNA]</scope>
    <source>
        <tissue evidence="6">Kernel</tissue>
    </source>
</reference>
<name>AMP21_MACIN</name>
<keyword id="KW-0044">Antibiotic</keyword>
<keyword id="KW-0929">Antimicrobial</keyword>
<keyword id="KW-0295">Fungicide</keyword>
<keyword id="KW-0611">Plant defense</keyword>
<keyword id="KW-0964">Secreted</keyword>
<keyword id="KW-0708">Seed storage protein</keyword>
<keyword id="KW-0732">Signal</keyword>
<keyword id="KW-0758">Storage protein</keyword>
<protein>
    <recommendedName>
        <fullName>Vicilin-like antimicrobial peptides 2-1</fullName>
    </recommendedName>
    <alternativeName>
        <fullName>MiAMP2</fullName>
    </alternativeName>
    <component>
        <recommendedName>
            <fullName>Antimicrobial peptide 2a</fullName>
        </recommendedName>
        <alternativeName>
            <fullName>MiAMP2a</fullName>
        </alternativeName>
    </component>
    <component>
        <recommendedName>
            <fullName>Antimicrobial peptide 2b</fullName>
        </recommendedName>
        <alternativeName>
            <fullName>MiAMP2b</fullName>
        </alternativeName>
    </component>
    <component>
        <recommendedName>
            <fullName>Antimicrobial peptide 2c-1</fullName>
        </recommendedName>
        <alternativeName>
            <fullName>MiAMP2c-1</fullName>
        </alternativeName>
    </component>
    <component>
        <recommendedName>
            <fullName>Antimicrobial peptide 2c-2</fullName>
        </recommendedName>
        <alternativeName>
            <fullName>MiAMP2c-2</fullName>
        </alternativeName>
    </component>
    <component>
        <recommendedName>
            <fullName>Antimicrobial peptide 2c-3</fullName>
        </recommendedName>
        <alternativeName>
            <fullName>MiAMP2c-3</fullName>
        </alternativeName>
    </component>
    <component>
        <recommendedName>
            <fullName>Antimicrobial peptide 2d</fullName>
        </recommendedName>
        <alternativeName>
            <fullName>MiAMP2d</fullName>
        </alternativeName>
    </component>
</protein>
<accession>Q9SPL5</accession>
<evidence type="ECO:0000250" key="1"/>
<evidence type="ECO:0000250" key="2">
    <source>
        <dbReference type="UniProtKB" id="Q9SPL3"/>
    </source>
</evidence>
<evidence type="ECO:0000255" key="3"/>
<evidence type="ECO:0000256" key="4">
    <source>
        <dbReference type="SAM" id="MobiDB-lite"/>
    </source>
</evidence>
<evidence type="ECO:0000303" key="5">
    <source>
    </source>
</evidence>
<evidence type="ECO:0000312" key="6">
    <source>
        <dbReference type="EMBL" id="AAD54244.1"/>
    </source>
</evidence>
<gene>
    <name evidence="5" type="primary">AMP2-1</name>
</gene>
<organism>
    <name type="scientific">Macadamia integrifolia</name>
    <name type="common">Macadamia nut</name>
    <dbReference type="NCBI Taxonomy" id="60698"/>
    <lineage>
        <taxon>Eukaryota</taxon>
        <taxon>Viridiplantae</taxon>
        <taxon>Streptophyta</taxon>
        <taxon>Embryophyta</taxon>
        <taxon>Tracheophyta</taxon>
        <taxon>Spermatophyta</taxon>
        <taxon>Magnoliopsida</taxon>
        <taxon>Proteales</taxon>
        <taxon>Proteaceae</taxon>
        <taxon>Macadamia</taxon>
    </lineage>
</organism>
<sequence>MAINTSNLCSLLFLLSLFLLSTTVSLAESEFDRQEYEECKRQCMQLETSGQMRRCVSQCDKRFEEDIDWSKYDNQEDPQTECQQCQRRCRQQESGPRQQQYCQRRCKEICEEEEEYNRQRDPQQQYEQCQKHCQRRETEPRHMQTCQQRCERRYEKEKRKQQKRYEEQQREDEEKYEERMKEEDNKRDPQQREYEDCRRRCEQQEPRQQHQCQLRCREQQRQHGRGGDMMNPQRGGSGRYEEGEEEQSDNPYYFDERSLSTRFRTEEGHISVLENFYGRSKLLRALKNYRLVLLEANPNAFVLPTHLDADAILLVIGGRGALKMIHHDNRESYNLECGDVIRIPAGTTFYLINRDNNERLHIAKFLQTISTPGQYKEFFPAGGQNPEPYLSTFSKEILEAALNTQTEKLRGVFGQQREGVIIRASQEQIRELTRDDSESRHWHIRRGGESSRGPYNLFNKRPLYSNKYGQAYEVKPEDYRQLQDMDLSVFIANVTQGSMMGPFFNTRSTKVVVVASGEADVEMACPHLSGRHGGRGGGKRHEEEEDVHYEQVRARLSKREAIVVLAGHPVVFVSSGNENLLLFAFGINAQNNHENFLAGRERNVLQQIEPQAMELAFAAPRKEVEESFNSQDQSIFFPGPRQHQQQSPRSTKQQQPLVSILDFVGF</sequence>
<feature type="signal peptide" evidence="3">
    <location>
        <begin position="1"/>
        <end position="27"/>
    </location>
</feature>
<feature type="chain" id="PRO_0000250388" description="Vicilin-like antimicrobial peptides 2-1">
    <location>
        <begin position="28"/>
        <end position="666"/>
    </location>
</feature>
<feature type="peptide" id="PRO_0000250389" description="Antimicrobial peptide 2a" evidence="3 5">
    <location>
        <begin position="28"/>
        <end position="76"/>
    </location>
</feature>
<feature type="peptide" id="PRO_0000250390" description="Antimicrobial peptide 2b" evidence="2">
    <location>
        <begin position="77"/>
        <end position="117"/>
    </location>
</feature>
<feature type="peptide" id="PRO_0000250391" description="Antimicrobial peptide 2c-3" evidence="2">
    <location>
        <begin position="118"/>
        <end position="184"/>
    </location>
</feature>
<feature type="peptide" id="PRO_0000250392" description="Antimicrobial peptide 2c-2" evidence="2">
    <location>
        <begin position="118"/>
        <end position="164"/>
    </location>
</feature>
<feature type="peptide" id="PRO_0000250393" description="Antimicrobial peptide 2c-1" evidence="2">
    <location>
        <begin position="118"/>
        <end position="162"/>
    </location>
</feature>
<feature type="peptide" id="PRO_0000250394" description="Antimicrobial peptide 2d" evidence="2">
    <location>
        <begin position="186"/>
        <end position="220"/>
    </location>
</feature>
<feature type="domain" description="Cupin type-1 1" evidence="3">
    <location>
        <begin position="271"/>
        <end position="410"/>
    </location>
</feature>
<feature type="domain" description="Cupin type-1 2" evidence="3">
    <location>
        <begin position="455"/>
        <end position="625"/>
    </location>
</feature>
<feature type="region of interest" description="Disordered" evidence="4">
    <location>
        <begin position="161"/>
        <end position="191"/>
    </location>
</feature>
<feature type="region of interest" description="Disordered" evidence="4">
    <location>
        <begin position="219"/>
        <end position="254"/>
    </location>
</feature>
<feature type="region of interest" description="Disordered" evidence="4">
    <location>
        <begin position="629"/>
        <end position="655"/>
    </location>
</feature>
<feature type="compositionally biased region" description="Low complexity" evidence="4">
    <location>
        <begin position="642"/>
        <end position="655"/>
    </location>
</feature>
<comment type="function">
    <text evidence="2">Antimicrobial peptides 2b, 2c and 2d have antibacterial and antifungal activity against a range of species.</text>
</comment>
<comment type="subcellular location">
    <subcellularLocation>
        <location evidence="1">Secreted</location>
    </subcellularLocation>
</comment>
<comment type="similarity">
    <text evidence="3">Belongs to the 7S seed storage protein family.</text>
</comment>
<proteinExistence type="evidence at transcript level"/>
<dbReference type="EMBL" id="AF161883">
    <property type="protein sequence ID" value="AAD54244.1"/>
    <property type="molecule type" value="mRNA"/>
</dbReference>
<dbReference type="SMR" id="Q9SPL5"/>
<dbReference type="GO" id="GO:0005576">
    <property type="term" value="C:extracellular region"/>
    <property type="evidence" value="ECO:0007669"/>
    <property type="project" value="UniProtKB-SubCell"/>
</dbReference>
<dbReference type="GO" id="GO:0045735">
    <property type="term" value="F:nutrient reservoir activity"/>
    <property type="evidence" value="ECO:0007669"/>
    <property type="project" value="UniProtKB-KW"/>
</dbReference>
<dbReference type="GO" id="GO:0042742">
    <property type="term" value="P:defense response to bacterium"/>
    <property type="evidence" value="ECO:0007669"/>
    <property type="project" value="UniProtKB-KW"/>
</dbReference>
<dbReference type="GO" id="GO:0050832">
    <property type="term" value="P:defense response to fungus"/>
    <property type="evidence" value="ECO:0000250"/>
    <property type="project" value="UniProtKB"/>
</dbReference>
<dbReference type="GO" id="GO:0031640">
    <property type="term" value="P:killing of cells of another organism"/>
    <property type="evidence" value="ECO:0007669"/>
    <property type="project" value="UniProtKB-KW"/>
</dbReference>
<dbReference type="CDD" id="cd02245">
    <property type="entry name" value="cupin_7S_vicilin-like_C"/>
    <property type="match status" value="1"/>
</dbReference>
<dbReference type="CDD" id="cd02244">
    <property type="entry name" value="cupin_7S_vicilin-like_N"/>
    <property type="match status" value="1"/>
</dbReference>
<dbReference type="FunFam" id="2.60.120.10:FF:000173">
    <property type="entry name" value="Vicilin-like antimicrobial peptides 2-3"/>
    <property type="match status" value="1"/>
</dbReference>
<dbReference type="Gene3D" id="6.10.250.890">
    <property type="match status" value="1"/>
</dbReference>
<dbReference type="Gene3D" id="2.60.120.10">
    <property type="entry name" value="Jelly Rolls"/>
    <property type="match status" value="2"/>
</dbReference>
<dbReference type="InterPro" id="IPR006045">
    <property type="entry name" value="Cupin_1"/>
</dbReference>
<dbReference type="InterPro" id="IPR014710">
    <property type="entry name" value="RmlC-like_jellyroll"/>
</dbReference>
<dbReference type="InterPro" id="IPR011051">
    <property type="entry name" value="RmlC_Cupin_sf"/>
</dbReference>
<dbReference type="InterPro" id="IPR050253">
    <property type="entry name" value="Seed_Storage-Functional"/>
</dbReference>
<dbReference type="InterPro" id="IPR006792">
    <property type="entry name" value="Vicilin_N"/>
</dbReference>
<dbReference type="PANTHER" id="PTHR31189:SF13">
    <property type="entry name" value="CUPINCIN"/>
    <property type="match status" value="1"/>
</dbReference>
<dbReference type="PANTHER" id="PTHR31189">
    <property type="entry name" value="OS03G0336100 PROTEIN-RELATED"/>
    <property type="match status" value="1"/>
</dbReference>
<dbReference type="Pfam" id="PF00190">
    <property type="entry name" value="Cupin_1"/>
    <property type="match status" value="2"/>
</dbReference>
<dbReference type="Pfam" id="PF04702">
    <property type="entry name" value="Vicilin_N"/>
    <property type="match status" value="1"/>
</dbReference>
<dbReference type="SMART" id="SM00835">
    <property type="entry name" value="Cupin_1"/>
    <property type="match status" value="2"/>
</dbReference>
<dbReference type="SUPFAM" id="SSF51182">
    <property type="entry name" value="RmlC-like cupins"/>
    <property type="match status" value="2"/>
</dbReference>